<sequence>MVDSKTPAKTKLLDSSSISNVRVVLRVRPFLPREISDESCDGRSCVSVIGGDGGDTSEVAVYLKDPDSCRNESYQLDAFYGREDDNVKHIFDREVSPLIPGIFHGFNATVLAYGATGSGKTFTMQGIDELPGLMPLTMSTILSMCEKTRSRAEISYYEVYMDRCWDLLEVKDNEIAVWDDKDGQVHLKGLSSVPVKSMSEFQEAYLCGVQRRKVAHTGLNDVSSRSHGVLVISVTSQGLVTGKINLIDLAGNEDNRRTGNEGIRLQESAKINQSLFALSNVVYALNNNLPRVPYRETKLTRILQDSLGGTSRALMVACLNPGEYQESLRTVSLAARSRHISNNVSLNPKVETPKVKIDMEAKLQAWLESKGKMKSAHRMMAIRSPLMGTNQTSISQSSVKKLLCHRSAIAESAKLAGTGQRDAFVTARNLFGVETLAASHLWEPIRNLQLASPTKEDERDTSGEENLLVSEASLRDNTLDVEKKYTELSPLREALSPIDSNAKPNSAHGSSPFLKPMTPKTPFLSTNPEIMQMEGTCQKFNAWSNNLKTSLIKEYIHFLNTANREELRELKGIGQKMAEYIIELRETSPLKSLTDLEKIGFTSRQVHNLFKKATEGVLEKPVSASTTP</sequence>
<reference key="1">
    <citation type="journal article" date="2000" name="Nature">
        <title>Sequence and analysis of chromosome 5 of the plant Arabidopsis thaliana.</title>
        <authorList>
            <person name="Tabata S."/>
            <person name="Kaneko T."/>
            <person name="Nakamura Y."/>
            <person name="Kotani H."/>
            <person name="Kato T."/>
            <person name="Asamizu E."/>
            <person name="Miyajima N."/>
            <person name="Sasamoto S."/>
            <person name="Kimura T."/>
            <person name="Hosouchi T."/>
            <person name="Kawashima K."/>
            <person name="Kohara M."/>
            <person name="Matsumoto M."/>
            <person name="Matsuno A."/>
            <person name="Muraki A."/>
            <person name="Nakayama S."/>
            <person name="Nakazaki N."/>
            <person name="Naruo K."/>
            <person name="Okumura S."/>
            <person name="Shinpo S."/>
            <person name="Takeuchi C."/>
            <person name="Wada T."/>
            <person name="Watanabe A."/>
            <person name="Yamada M."/>
            <person name="Yasuda M."/>
            <person name="Sato S."/>
            <person name="de la Bastide M."/>
            <person name="Huang E."/>
            <person name="Spiegel L."/>
            <person name="Gnoj L."/>
            <person name="O'Shaughnessy A."/>
            <person name="Preston R."/>
            <person name="Habermann K."/>
            <person name="Murray J."/>
            <person name="Johnson D."/>
            <person name="Rohlfing T."/>
            <person name="Nelson J."/>
            <person name="Stoneking T."/>
            <person name="Pepin K."/>
            <person name="Spieth J."/>
            <person name="Sekhon M."/>
            <person name="Armstrong J."/>
            <person name="Becker M."/>
            <person name="Belter E."/>
            <person name="Cordum H."/>
            <person name="Cordes M."/>
            <person name="Courtney L."/>
            <person name="Courtney W."/>
            <person name="Dante M."/>
            <person name="Du H."/>
            <person name="Edwards J."/>
            <person name="Fryman J."/>
            <person name="Haakensen B."/>
            <person name="Lamar E."/>
            <person name="Latreille P."/>
            <person name="Leonard S."/>
            <person name="Meyer R."/>
            <person name="Mulvaney E."/>
            <person name="Ozersky P."/>
            <person name="Riley A."/>
            <person name="Strowmatt C."/>
            <person name="Wagner-McPherson C."/>
            <person name="Wollam A."/>
            <person name="Yoakum M."/>
            <person name="Bell M."/>
            <person name="Dedhia N."/>
            <person name="Parnell L."/>
            <person name="Shah R."/>
            <person name="Rodriguez M."/>
            <person name="Hoon See L."/>
            <person name="Vil D."/>
            <person name="Baker J."/>
            <person name="Kirchoff K."/>
            <person name="Toth K."/>
            <person name="King L."/>
            <person name="Bahret A."/>
            <person name="Miller B."/>
            <person name="Marra M.A."/>
            <person name="Martienssen R."/>
            <person name="McCombie W.R."/>
            <person name="Wilson R.K."/>
            <person name="Murphy G."/>
            <person name="Bancroft I."/>
            <person name="Volckaert G."/>
            <person name="Wambutt R."/>
            <person name="Duesterhoeft A."/>
            <person name="Stiekema W."/>
            <person name="Pohl T."/>
            <person name="Entian K.-D."/>
            <person name="Terryn N."/>
            <person name="Hartley N."/>
            <person name="Bent E."/>
            <person name="Johnson S."/>
            <person name="Langham S.-A."/>
            <person name="McCullagh B."/>
            <person name="Robben J."/>
            <person name="Grymonprez B."/>
            <person name="Zimmermann W."/>
            <person name="Ramsperger U."/>
            <person name="Wedler H."/>
            <person name="Balke K."/>
            <person name="Wedler E."/>
            <person name="Peters S."/>
            <person name="van Staveren M."/>
            <person name="Dirkse W."/>
            <person name="Mooijman P."/>
            <person name="Klein Lankhorst R."/>
            <person name="Weitzenegger T."/>
            <person name="Bothe G."/>
            <person name="Rose M."/>
            <person name="Hauf J."/>
            <person name="Berneiser S."/>
            <person name="Hempel S."/>
            <person name="Feldpausch M."/>
            <person name="Lamberth S."/>
            <person name="Villarroel R."/>
            <person name="Gielen J."/>
            <person name="Ardiles W."/>
            <person name="Bents O."/>
            <person name="Lemcke K."/>
            <person name="Kolesov G."/>
            <person name="Mayer K.F.X."/>
            <person name="Rudd S."/>
            <person name="Schoof H."/>
            <person name="Schueller C."/>
            <person name="Zaccaria P."/>
            <person name="Mewes H.-W."/>
            <person name="Bevan M."/>
            <person name="Fransz P.F."/>
        </authorList>
    </citation>
    <scope>NUCLEOTIDE SEQUENCE [LARGE SCALE GENOMIC DNA]</scope>
    <source>
        <strain>cv. Columbia</strain>
    </source>
</reference>
<reference key="2">
    <citation type="journal article" date="2017" name="Plant J.">
        <title>Araport11: a complete reannotation of the Arabidopsis thaliana reference genome.</title>
        <authorList>
            <person name="Cheng C.Y."/>
            <person name="Krishnakumar V."/>
            <person name="Chan A.P."/>
            <person name="Thibaud-Nissen F."/>
            <person name="Schobel S."/>
            <person name="Town C.D."/>
        </authorList>
    </citation>
    <scope>GENOME REANNOTATION</scope>
    <source>
        <strain>cv. Columbia</strain>
    </source>
</reference>
<reference key="3">
    <citation type="journal article" date="2003" name="Science">
        <title>Empirical analysis of transcriptional activity in the Arabidopsis genome.</title>
        <authorList>
            <person name="Yamada K."/>
            <person name="Lim J."/>
            <person name="Dale J.M."/>
            <person name="Chen H."/>
            <person name="Shinn P."/>
            <person name="Palm C.J."/>
            <person name="Southwick A.M."/>
            <person name="Wu H.C."/>
            <person name="Kim C.J."/>
            <person name="Nguyen M."/>
            <person name="Pham P.K."/>
            <person name="Cheuk R.F."/>
            <person name="Karlin-Newmann G."/>
            <person name="Liu S.X."/>
            <person name="Lam B."/>
            <person name="Sakano H."/>
            <person name="Wu T."/>
            <person name="Yu G."/>
            <person name="Miranda M."/>
            <person name="Quach H.L."/>
            <person name="Tripp M."/>
            <person name="Chang C.H."/>
            <person name="Lee J.M."/>
            <person name="Toriumi M.J."/>
            <person name="Chan M.M."/>
            <person name="Tang C.C."/>
            <person name="Onodera C.S."/>
            <person name="Deng J.M."/>
            <person name="Akiyama K."/>
            <person name="Ansari Y."/>
            <person name="Arakawa T."/>
            <person name="Banh J."/>
            <person name="Banno F."/>
            <person name="Bowser L."/>
            <person name="Brooks S.Y."/>
            <person name="Carninci P."/>
            <person name="Chao Q."/>
            <person name="Choy N."/>
            <person name="Enju A."/>
            <person name="Goldsmith A.D."/>
            <person name="Gurjal M."/>
            <person name="Hansen N.F."/>
            <person name="Hayashizaki Y."/>
            <person name="Johnson-Hopson C."/>
            <person name="Hsuan V.W."/>
            <person name="Iida K."/>
            <person name="Karnes M."/>
            <person name="Khan S."/>
            <person name="Koesema E."/>
            <person name="Ishida J."/>
            <person name="Jiang P.X."/>
            <person name="Jones T."/>
            <person name="Kawai J."/>
            <person name="Kamiya A."/>
            <person name="Meyers C."/>
            <person name="Nakajima M."/>
            <person name="Narusaka M."/>
            <person name="Seki M."/>
            <person name="Sakurai T."/>
            <person name="Satou M."/>
            <person name="Tamse R."/>
            <person name="Vaysberg M."/>
            <person name="Wallender E.K."/>
            <person name="Wong C."/>
            <person name="Yamamura Y."/>
            <person name="Yuan S."/>
            <person name="Shinozaki K."/>
            <person name="Davis R.W."/>
            <person name="Theologis A."/>
            <person name="Ecker J.R."/>
        </authorList>
    </citation>
    <scope>NUCLEOTIDE SEQUENCE [LARGE SCALE MRNA]</scope>
    <source>
        <strain>cv. Columbia</strain>
    </source>
</reference>
<reference key="4">
    <citation type="submission" date="2005-02" db="EMBL/GenBank/DDBJ databases">
        <title>Arabidopsis ORF clones.</title>
        <authorList>
            <person name="Cheuk R.F."/>
            <person name="Chen H."/>
            <person name="Kim C.J."/>
            <person name="Shinn P."/>
            <person name="Ecker J.R."/>
        </authorList>
    </citation>
    <scope>NUCLEOTIDE SEQUENCE [LARGE SCALE MRNA]</scope>
    <source>
        <strain>cv. Columbia</strain>
    </source>
</reference>
<reference key="5">
    <citation type="journal article" date="2001" name="BMC Genomics">
        <title>Kinesins in the Arabidopsis genome: a comparative analysis among eukaryotes.</title>
        <authorList>
            <person name="Reddy A.S."/>
            <person name="Day I.S."/>
        </authorList>
    </citation>
    <scope>GENE FAMILY</scope>
</reference>
<reference key="6">
    <citation type="journal article" date="2006" name="BMC Genomics">
        <title>Comprehensive comparative analysis of kinesins in photosynthetic eukaryotes.</title>
        <authorList>
            <person name="Richardson D.N."/>
            <person name="Simmons M.P."/>
            <person name="Reddy A.S."/>
        </authorList>
    </citation>
    <scope>GENE FAMILY</scope>
    <scope>NOMENCLATURE</scope>
</reference>
<reference key="7">
    <citation type="journal article" date="2012" name="Protoplasma">
        <title>Functions of the Arabidopsis kinesin superfamily of microtubule-based motor proteins.</title>
        <authorList>
            <person name="Zhu C."/>
            <person name="Dixit R."/>
        </authorList>
    </citation>
    <scope>REVIEW</scope>
</reference>
<protein>
    <recommendedName>
        <fullName evidence="4">Kinesin-like protein KIN-10B</fullName>
    </recommendedName>
</protein>
<name>KN10B_ARATH</name>
<feature type="chain" id="PRO_0000437033" description="Kinesin-like protein KIN-10B">
    <location>
        <begin position="1"/>
        <end position="628"/>
    </location>
</feature>
<feature type="domain" description="Kinesin motor" evidence="1">
    <location>
        <begin position="20"/>
        <end position="340"/>
    </location>
</feature>
<feature type="region of interest" description="Disordered" evidence="2">
    <location>
        <begin position="496"/>
        <end position="519"/>
    </location>
</feature>
<feature type="compositionally biased region" description="Polar residues" evidence="2">
    <location>
        <begin position="498"/>
        <end position="509"/>
    </location>
</feature>
<feature type="binding site" evidence="1">
    <location>
        <begin position="114"/>
        <end position="121"/>
    </location>
    <ligand>
        <name>ATP</name>
        <dbReference type="ChEBI" id="CHEBI:30616"/>
    </ligand>
</feature>
<feature type="sequence conflict" description="In Ref. 3; AAM97018." evidence="4" ref="3">
    <original>V</original>
    <variation>A</variation>
    <location>
        <position position="606"/>
    </location>
</feature>
<organism>
    <name type="scientific">Arabidopsis thaliana</name>
    <name type="common">Mouse-ear cress</name>
    <dbReference type="NCBI Taxonomy" id="3702"/>
    <lineage>
        <taxon>Eukaryota</taxon>
        <taxon>Viridiplantae</taxon>
        <taxon>Streptophyta</taxon>
        <taxon>Embryophyta</taxon>
        <taxon>Tracheophyta</taxon>
        <taxon>Spermatophyta</taxon>
        <taxon>Magnoliopsida</taxon>
        <taxon>eudicotyledons</taxon>
        <taxon>Gunneridae</taxon>
        <taxon>Pentapetalae</taxon>
        <taxon>rosids</taxon>
        <taxon>malvids</taxon>
        <taxon>Brassicales</taxon>
        <taxon>Brassicaceae</taxon>
        <taxon>Camelineae</taxon>
        <taxon>Arabidopsis</taxon>
    </lineage>
</organism>
<proteinExistence type="evidence at transcript level"/>
<dbReference type="EMBL" id="AL162874">
    <property type="protein sequence ID" value="CAB85542.1"/>
    <property type="status" value="ALT_SEQ"/>
    <property type="molecule type" value="Genomic_DNA"/>
</dbReference>
<dbReference type="EMBL" id="CP002688">
    <property type="status" value="NOT_ANNOTATED_CDS"/>
    <property type="molecule type" value="Genomic_DNA"/>
</dbReference>
<dbReference type="EMBL" id="AY136352">
    <property type="protein sequence ID" value="AAM97018.1"/>
    <property type="molecule type" value="mRNA"/>
</dbReference>
<dbReference type="EMBL" id="BT021107">
    <property type="protein sequence ID" value="AAX12877.1"/>
    <property type="molecule type" value="mRNA"/>
</dbReference>
<dbReference type="PIR" id="T48258">
    <property type="entry name" value="T48258"/>
</dbReference>
<dbReference type="SMR" id="Q5E913"/>
<dbReference type="FunCoup" id="Q5E913">
    <property type="interactions" value="1081"/>
</dbReference>
<dbReference type="STRING" id="3702.Q5E913"/>
<dbReference type="PaxDb" id="3702-AT5G02370.1"/>
<dbReference type="Araport" id="AT5G02370"/>
<dbReference type="TAIR" id="AT5G02370"/>
<dbReference type="eggNOG" id="KOG0242">
    <property type="taxonomic scope" value="Eukaryota"/>
</dbReference>
<dbReference type="HOGENOM" id="CLU_001485_27_2_1"/>
<dbReference type="InParanoid" id="Q5E913"/>
<dbReference type="PhylomeDB" id="Q5E913"/>
<dbReference type="PRO" id="PR:Q5E913"/>
<dbReference type="Proteomes" id="UP000006548">
    <property type="component" value="Chromosome 5"/>
</dbReference>
<dbReference type="ExpressionAtlas" id="Q5E913">
    <property type="expression patterns" value="baseline and differential"/>
</dbReference>
<dbReference type="GO" id="GO:0009507">
    <property type="term" value="C:chloroplast"/>
    <property type="evidence" value="ECO:0007005"/>
    <property type="project" value="TAIR"/>
</dbReference>
<dbReference type="GO" id="GO:0005737">
    <property type="term" value="C:cytoplasm"/>
    <property type="evidence" value="ECO:0000318"/>
    <property type="project" value="GO_Central"/>
</dbReference>
<dbReference type="GO" id="GO:0005871">
    <property type="term" value="C:kinesin complex"/>
    <property type="evidence" value="ECO:0000318"/>
    <property type="project" value="GO_Central"/>
</dbReference>
<dbReference type="GO" id="GO:0005874">
    <property type="term" value="C:microtubule"/>
    <property type="evidence" value="ECO:0000318"/>
    <property type="project" value="GO_Central"/>
</dbReference>
<dbReference type="GO" id="GO:0005524">
    <property type="term" value="F:ATP binding"/>
    <property type="evidence" value="ECO:0007669"/>
    <property type="project" value="UniProtKB-KW"/>
</dbReference>
<dbReference type="GO" id="GO:0016887">
    <property type="term" value="F:ATP hydrolysis activity"/>
    <property type="evidence" value="ECO:0000318"/>
    <property type="project" value="GO_Central"/>
</dbReference>
<dbReference type="GO" id="GO:0008017">
    <property type="term" value="F:microtubule binding"/>
    <property type="evidence" value="ECO:0000318"/>
    <property type="project" value="GO_Central"/>
</dbReference>
<dbReference type="GO" id="GO:0003777">
    <property type="term" value="F:microtubule motor activity"/>
    <property type="evidence" value="ECO:0000318"/>
    <property type="project" value="GO_Central"/>
</dbReference>
<dbReference type="GO" id="GO:0007018">
    <property type="term" value="P:microtubule-based movement"/>
    <property type="evidence" value="ECO:0000318"/>
    <property type="project" value="GO_Central"/>
</dbReference>
<dbReference type="CDD" id="cd01376">
    <property type="entry name" value="KISc_KID_like"/>
    <property type="match status" value="1"/>
</dbReference>
<dbReference type="FunFam" id="3.40.850.10:FF:000087">
    <property type="entry name" value="Kinesin-like protein"/>
    <property type="match status" value="1"/>
</dbReference>
<dbReference type="FunFam" id="1.10.150.280:FF:000003">
    <property type="entry name" value="Kinesin-like protein KIN-10C"/>
    <property type="match status" value="1"/>
</dbReference>
<dbReference type="Gene3D" id="1.10.150.280">
    <property type="entry name" value="AF1531-like domain"/>
    <property type="match status" value="1"/>
</dbReference>
<dbReference type="Gene3D" id="3.40.850.10">
    <property type="entry name" value="Kinesin motor domain"/>
    <property type="match status" value="1"/>
</dbReference>
<dbReference type="InterPro" id="IPR027640">
    <property type="entry name" value="Kinesin-like_fam"/>
</dbReference>
<dbReference type="InterPro" id="IPR019821">
    <property type="entry name" value="Kinesin_motor_CS"/>
</dbReference>
<dbReference type="InterPro" id="IPR001752">
    <property type="entry name" value="Kinesin_motor_dom"/>
</dbReference>
<dbReference type="InterPro" id="IPR036961">
    <property type="entry name" value="Kinesin_motor_dom_sf"/>
</dbReference>
<dbReference type="InterPro" id="IPR027417">
    <property type="entry name" value="P-loop_NTPase"/>
</dbReference>
<dbReference type="InterPro" id="IPR010994">
    <property type="entry name" value="RuvA_2-like"/>
</dbReference>
<dbReference type="PANTHER" id="PTHR47969">
    <property type="entry name" value="CHROMOSOME-ASSOCIATED KINESIN KIF4A-RELATED"/>
    <property type="match status" value="1"/>
</dbReference>
<dbReference type="PANTHER" id="PTHR47969:SF9">
    <property type="entry name" value="KINESIN-LIKE PROTEIN"/>
    <property type="match status" value="1"/>
</dbReference>
<dbReference type="Pfam" id="PF12836">
    <property type="entry name" value="HHH_3"/>
    <property type="match status" value="1"/>
</dbReference>
<dbReference type="Pfam" id="PF00225">
    <property type="entry name" value="Kinesin"/>
    <property type="match status" value="1"/>
</dbReference>
<dbReference type="PRINTS" id="PR00380">
    <property type="entry name" value="KINESINHEAVY"/>
</dbReference>
<dbReference type="SMART" id="SM00129">
    <property type="entry name" value="KISc"/>
    <property type="match status" value="1"/>
</dbReference>
<dbReference type="SUPFAM" id="SSF52540">
    <property type="entry name" value="P-loop containing nucleoside triphosphate hydrolases"/>
    <property type="match status" value="1"/>
</dbReference>
<dbReference type="SUPFAM" id="SSF47781">
    <property type="entry name" value="RuvA domain 2-like"/>
    <property type="match status" value="1"/>
</dbReference>
<dbReference type="PROSITE" id="PS00411">
    <property type="entry name" value="KINESIN_MOTOR_1"/>
    <property type="match status" value="1"/>
</dbReference>
<dbReference type="PROSITE" id="PS50067">
    <property type="entry name" value="KINESIN_MOTOR_2"/>
    <property type="match status" value="1"/>
</dbReference>
<comment type="similarity">
    <text evidence="3">Belongs to the TRAFAC class myosin-kinesin ATPase superfamily. Kinesin family. KIN-10 subfamily.</text>
</comment>
<comment type="sequence caution" evidence="4">
    <conflict type="erroneous gene model prediction">
        <sequence resource="EMBL-CDS" id="CAB85542"/>
    </conflict>
</comment>
<gene>
    <name evidence="4" type="primary">KIN10B</name>
    <name evidence="5" type="ordered locus">At5g02370</name>
    <name evidence="6" type="ORF">T1E22_130</name>
</gene>
<evidence type="ECO:0000255" key="1">
    <source>
        <dbReference type="PROSITE-ProRule" id="PRU00283"/>
    </source>
</evidence>
<evidence type="ECO:0000256" key="2">
    <source>
        <dbReference type="SAM" id="MobiDB-lite"/>
    </source>
</evidence>
<evidence type="ECO:0000303" key="3">
    <source>
    </source>
</evidence>
<evidence type="ECO:0000305" key="4"/>
<evidence type="ECO:0000312" key="5">
    <source>
        <dbReference type="Araport" id="AT5G02370"/>
    </source>
</evidence>
<evidence type="ECO:0000312" key="6">
    <source>
        <dbReference type="EMBL" id="CAB85542.1"/>
    </source>
</evidence>
<accession>Q5E913</accession>
<accession>Q8L7B8</accession>
<accession>Q9LZ88</accession>
<keyword id="KW-0067">ATP-binding</keyword>
<keyword id="KW-0493">Microtubule</keyword>
<keyword id="KW-0505">Motor protein</keyword>
<keyword id="KW-0547">Nucleotide-binding</keyword>
<keyword id="KW-1185">Reference proteome</keyword>